<reference key="1">
    <citation type="journal article" date="2007" name="Proc. Natl. Acad. Sci. U.S.A.">
        <title>Genome sequencing reveals complex secondary metabolome in the marine actinomycete Salinispora tropica.</title>
        <authorList>
            <person name="Udwary D.W."/>
            <person name="Zeigler L."/>
            <person name="Asolkar R.N."/>
            <person name="Singan V."/>
            <person name="Lapidus A."/>
            <person name="Fenical W."/>
            <person name="Jensen P.R."/>
            <person name="Moore B.S."/>
        </authorList>
    </citation>
    <scope>NUCLEOTIDE SEQUENCE [LARGE SCALE GENOMIC DNA]</scope>
    <source>
        <strain>ATCC BAA-916 / DSM 44818 / JCM 13857 / NBRC 105044 / CNB-440</strain>
    </source>
</reference>
<sequence>MGGTFDPIHHGHLVAASEVADRFGLDEVIFVPTGQPWQKADEPVSPAEDRYLMTVIATASNPRFQVSRVDIDRSGPTYTIDTLRDLRAVCGAKVQLFFITGADALEKILSWKDLDEAFELAHFIGVTRPGFRLSDAHLPADTVSLVQVPAMAISSTDCRARVSRSAPLWYLVPDGVVQYIAKRRLYQQ</sequence>
<keyword id="KW-0067">ATP-binding</keyword>
<keyword id="KW-0520">NAD</keyword>
<keyword id="KW-0547">Nucleotide-binding</keyword>
<keyword id="KW-0548">Nucleotidyltransferase</keyword>
<keyword id="KW-0662">Pyridine nucleotide biosynthesis</keyword>
<keyword id="KW-1185">Reference proteome</keyword>
<keyword id="KW-0808">Transferase</keyword>
<feature type="chain" id="PRO_1000100793" description="Probable nicotinate-nucleotide adenylyltransferase">
    <location>
        <begin position="1"/>
        <end position="188"/>
    </location>
</feature>
<comment type="function">
    <text evidence="1">Catalyzes the reversible adenylation of nicotinate mononucleotide (NaMN) to nicotinic acid adenine dinucleotide (NaAD).</text>
</comment>
<comment type="catalytic activity">
    <reaction evidence="1">
        <text>nicotinate beta-D-ribonucleotide + ATP + H(+) = deamido-NAD(+) + diphosphate</text>
        <dbReference type="Rhea" id="RHEA:22860"/>
        <dbReference type="ChEBI" id="CHEBI:15378"/>
        <dbReference type="ChEBI" id="CHEBI:30616"/>
        <dbReference type="ChEBI" id="CHEBI:33019"/>
        <dbReference type="ChEBI" id="CHEBI:57502"/>
        <dbReference type="ChEBI" id="CHEBI:58437"/>
        <dbReference type="EC" id="2.7.7.18"/>
    </reaction>
</comment>
<comment type="pathway">
    <text evidence="1">Cofactor biosynthesis; NAD(+) biosynthesis; deamido-NAD(+) from nicotinate D-ribonucleotide: step 1/1.</text>
</comment>
<comment type="similarity">
    <text evidence="1">Belongs to the NadD family.</text>
</comment>
<accession>A4XAF6</accession>
<gene>
    <name evidence="1" type="primary">nadD</name>
    <name type="ordered locus">Strop_3474</name>
</gene>
<proteinExistence type="inferred from homology"/>
<organism>
    <name type="scientific">Salinispora tropica (strain ATCC BAA-916 / DSM 44818 / JCM 13857 / NBRC 105044 / CNB-440)</name>
    <dbReference type="NCBI Taxonomy" id="369723"/>
    <lineage>
        <taxon>Bacteria</taxon>
        <taxon>Bacillati</taxon>
        <taxon>Actinomycetota</taxon>
        <taxon>Actinomycetes</taxon>
        <taxon>Micromonosporales</taxon>
        <taxon>Micromonosporaceae</taxon>
        <taxon>Salinispora</taxon>
    </lineage>
</organism>
<name>NADD_SALTO</name>
<protein>
    <recommendedName>
        <fullName evidence="1">Probable nicotinate-nucleotide adenylyltransferase</fullName>
        <ecNumber evidence="1">2.7.7.18</ecNumber>
    </recommendedName>
    <alternativeName>
        <fullName evidence="1">Deamido-NAD(+) diphosphorylase</fullName>
    </alternativeName>
    <alternativeName>
        <fullName evidence="1">Deamido-NAD(+) pyrophosphorylase</fullName>
    </alternativeName>
    <alternativeName>
        <fullName evidence="1">Nicotinate mononucleotide adenylyltransferase</fullName>
        <shortName evidence="1">NaMN adenylyltransferase</shortName>
    </alternativeName>
</protein>
<evidence type="ECO:0000255" key="1">
    <source>
        <dbReference type="HAMAP-Rule" id="MF_00244"/>
    </source>
</evidence>
<dbReference type="EC" id="2.7.7.18" evidence="1"/>
<dbReference type="EMBL" id="CP000667">
    <property type="protein sequence ID" value="ABP55905.1"/>
    <property type="molecule type" value="Genomic_DNA"/>
</dbReference>
<dbReference type="SMR" id="A4XAF6"/>
<dbReference type="STRING" id="369723.Strop_3474"/>
<dbReference type="KEGG" id="stp:Strop_3474"/>
<dbReference type="eggNOG" id="COG1057">
    <property type="taxonomic scope" value="Bacteria"/>
</dbReference>
<dbReference type="HOGENOM" id="CLU_069765_1_1_11"/>
<dbReference type="UniPathway" id="UPA00253">
    <property type="reaction ID" value="UER00332"/>
</dbReference>
<dbReference type="Proteomes" id="UP000000235">
    <property type="component" value="Chromosome"/>
</dbReference>
<dbReference type="GO" id="GO:0005524">
    <property type="term" value="F:ATP binding"/>
    <property type="evidence" value="ECO:0007669"/>
    <property type="project" value="UniProtKB-KW"/>
</dbReference>
<dbReference type="GO" id="GO:0004515">
    <property type="term" value="F:nicotinate-nucleotide adenylyltransferase activity"/>
    <property type="evidence" value="ECO:0007669"/>
    <property type="project" value="UniProtKB-UniRule"/>
</dbReference>
<dbReference type="GO" id="GO:0009435">
    <property type="term" value="P:NAD biosynthetic process"/>
    <property type="evidence" value="ECO:0007669"/>
    <property type="project" value="UniProtKB-UniRule"/>
</dbReference>
<dbReference type="CDD" id="cd02165">
    <property type="entry name" value="NMNAT"/>
    <property type="match status" value="1"/>
</dbReference>
<dbReference type="FunFam" id="3.40.50.620:FF:000039">
    <property type="entry name" value="Probable nicotinate-nucleotide adenylyltransferase"/>
    <property type="match status" value="1"/>
</dbReference>
<dbReference type="Gene3D" id="3.40.50.620">
    <property type="entry name" value="HUPs"/>
    <property type="match status" value="1"/>
</dbReference>
<dbReference type="HAMAP" id="MF_00244">
    <property type="entry name" value="NaMN_adenylyltr"/>
    <property type="match status" value="1"/>
</dbReference>
<dbReference type="InterPro" id="IPR004821">
    <property type="entry name" value="Cyt_trans-like"/>
</dbReference>
<dbReference type="InterPro" id="IPR005248">
    <property type="entry name" value="NadD/NMNAT"/>
</dbReference>
<dbReference type="InterPro" id="IPR014729">
    <property type="entry name" value="Rossmann-like_a/b/a_fold"/>
</dbReference>
<dbReference type="NCBIfam" id="TIGR00125">
    <property type="entry name" value="cyt_tran_rel"/>
    <property type="match status" value="1"/>
</dbReference>
<dbReference type="NCBIfam" id="TIGR00482">
    <property type="entry name" value="nicotinate (nicotinamide) nucleotide adenylyltransferase"/>
    <property type="match status" value="1"/>
</dbReference>
<dbReference type="NCBIfam" id="NF000840">
    <property type="entry name" value="PRK00071.1-3"/>
    <property type="match status" value="1"/>
</dbReference>
<dbReference type="PANTHER" id="PTHR39321">
    <property type="entry name" value="NICOTINATE-NUCLEOTIDE ADENYLYLTRANSFERASE-RELATED"/>
    <property type="match status" value="1"/>
</dbReference>
<dbReference type="PANTHER" id="PTHR39321:SF3">
    <property type="entry name" value="PHOSPHOPANTETHEINE ADENYLYLTRANSFERASE"/>
    <property type="match status" value="1"/>
</dbReference>
<dbReference type="Pfam" id="PF01467">
    <property type="entry name" value="CTP_transf_like"/>
    <property type="match status" value="1"/>
</dbReference>
<dbReference type="SUPFAM" id="SSF52374">
    <property type="entry name" value="Nucleotidylyl transferase"/>
    <property type="match status" value="1"/>
</dbReference>